<reference key="1">
    <citation type="journal article" date="2001" name="Nature">
        <title>Genome sequence and gene compaction of the eukaryote parasite Encephalitozoon cuniculi.</title>
        <authorList>
            <person name="Katinka M.D."/>
            <person name="Duprat S."/>
            <person name="Cornillot E."/>
            <person name="Metenier G."/>
            <person name="Thomarat F."/>
            <person name="Prensier G."/>
            <person name="Barbe V."/>
            <person name="Peyretaillade E."/>
            <person name="Brottier P."/>
            <person name="Wincker P."/>
            <person name="Delbac F."/>
            <person name="El Alaoui H."/>
            <person name="Peyret P."/>
            <person name="Saurin W."/>
            <person name="Gouy M."/>
            <person name="Weissenbach J."/>
            <person name="Vivares C.P."/>
        </authorList>
    </citation>
    <scope>NUCLEOTIDE SEQUENCE [LARGE SCALE GENOMIC DNA]</scope>
    <source>
        <strain>GB-M1</strain>
    </source>
</reference>
<reference key="2">
    <citation type="journal article" date="2006" name="Proteomics">
        <title>Proteomic analysis of the eukaryotic parasite Encephalitozoon cuniculi (microsporidia): a reference map for proteins expressed in late sporogonial stages.</title>
        <authorList>
            <person name="Brosson D."/>
            <person name="Kuhn L."/>
            <person name="Delbac F."/>
            <person name="Garin J."/>
            <person name="Vivares C.P."/>
            <person name="Texier C."/>
        </authorList>
    </citation>
    <scope>IDENTIFICATION BY MASS SPECTROMETRY [LARGE SCALE ANALYSIS]</scope>
    <scope>DEVELOPMENTAL STAGE</scope>
</reference>
<keyword id="KW-1185">Reference proteome</keyword>
<feature type="chain" id="PRO_0000382779" description="Uncharacterized protein ECU08_1280">
    <location>
        <begin position="1"/>
        <end position="438"/>
    </location>
</feature>
<sequence>MIPVRVRVFKGTNDKWEDMCIGMVFRIRRGSIFIEDDVSGRPFEISFEEKQCGKSKENVVIVYNDLEEHAICFEAEEIRDEFLEFVEKDLWSQSDLDVREECTASGRETNLFASLFRISRYMDASIFGRMLESRDGVLQLLRMENFHLFRMLLENGERVFRLFGVASKNKITPHGFYAEVIARNLDGPAVRTYEDFLIAMGKQELARSESKVAGMSNEEIRDFLRKCGSSSYKVGRVEMYLERIYKDDVYFFEMFYYLCLIFKERMSEAVDIGYIVCRIRGLTNEKYFSDDFLYALEGLYILLDVCKPEQLDVFYMEISSLFDNLEWYPDLQNFLVYLFGNHGFRTREFLINTGLMKRIFLSGCGGGMGEVFLSKMLLQVVSCGSRFMHRYFIKNDLFRNIAEMYRERRKDAVYSIFLQACSHADSDMKTYLDRHLQN</sequence>
<gene>
    <name type="ordered locus">ECU08_1280</name>
</gene>
<dbReference type="EMBL" id="AL590448">
    <property type="protein sequence ID" value="CAD26434.1"/>
    <property type="molecule type" value="Genomic_DNA"/>
</dbReference>
<dbReference type="RefSeq" id="NP_597258.1">
    <property type="nucleotide sequence ID" value="NM_001041867.1"/>
</dbReference>
<dbReference type="GeneID" id="859680"/>
<dbReference type="KEGG" id="ecu:ECU08_1280"/>
<dbReference type="VEuPathDB" id="MicrosporidiaDB:ECU08_1280"/>
<dbReference type="HOGENOM" id="CLU_607057_0_0_1"/>
<dbReference type="InParanoid" id="Q8SUN2"/>
<dbReference type="OrthoDB" id="2191648at2759"/>
<dbReference type="Proteomes" id="UP000000819">
    <property type="component" value="Chromosome VIII"/>
</dbReference>
<name>Y8C8_ENCCU</name>
<organism>
    <name type="scientific">Encephalitozoon cuniculi (strain GB-M1)</name>
    <name type="common">Microsporidian parasite</name>
    <dbReference type="NCBI Taxonomy" id="284813"/>
    <lineage>
        <taxon>Eukaryota</taxon>
        <taxon>Fungi</taxon>
        <taxon>Fungi incertae sedis</taxon>
        <taxon>Microsporidia</taxon>
        <taxon>Unikaryonidae</taxon>
        <taxon>Encephalitozoon</taxon>
    </lineage>
</organism>
<proteinExistence type="evidence at protein level"/>
<protein>
    <recommendedName>
        <fullName>Uncharacterized protein ECU08_1280</fullName>
    </recommendedName>
</protein>
<comment type="developmental stage">
    <text evidence="1">Expressed in late sporogonial stages.</text>
</comment>
<evidence type="ECO:0000269" key="1">
    <source>
    </source>
</evidence>
<accession>Q8SUN2</accession>